<protein>
    <recommendedName>
        <fullName>Dual specificity testis-specific protein kinase 1</fullName>
        <ecNumber>2.7.12.1</ecNumber>
    </recommendedName>
    <alternativeName>
        <fullName>Testicular protein kinase 1</fullName>
    </alternativeName>
</protein>
<gene>
    <name type="primary">TESK1</name>
</gene>
<feature type="chain" id="PRO_0000086746" description="Dual specificity testis-specific protein kinase 1">
    <location>
        <begin position="1"/>
        <end position="626"/>
    </location>
</feature>
<feature type="domain" description="Protein kinase" evidence="4">
    <location>
        <begin position="57"/>
        <end position="314"/>
    </location>
</feature>
<feature type="region of interest" description="Disordered" evidence="6">
    <location>
        <begin position="1"/>
        <end position="41"/>
    </location>
</feature>
<feature type="region of interest" description="Disordered" evidence="6">
    <location>
        <begin position="331"/>
        <end position="373"/>
    </location>
</feature>
<feature type="region of interest" description="Required for interaction with YWHAB" evidence="3">
    <location>
        <begin position="419"/>
        <end position="524"/>
    </location>
</feature>
<feature type="region of interest" description="Disordered" evidence="6">
    <location>
        <begin position="423"/>
        <end position="488"/>
    </location>
</feature>
<feature type="region of interest" description="Required for interaction with SPRED1 and SPRY2. Required for TESK1-mediated dephosphorylation of SPRY2 and SPRY2 inhibition of ERK phosphorylation" evidence="3">
    <location>
        <begin position="527"/>
        <end position="626"/>
    </location>
</feature>
<feature type="region of interest" description="Required for interaction with PARVA" evidence="3">
    <location>
        <begin position="527"/>
        <end position="624"/>
    </location>
</feature>
<feature type="region of interest" description="Disordered" evidence="6">
    <location>
        <begin position="529"/>
        <end position="564"/>
    </location>
</feature>
<feature type="compositionally biased region" description="Pro residues" evidence="6">
    <location>
        <begin position="8"/>
        <end position="26"/>
    </location>
</feature>
<feature type="compositionally biased region" description="Basic and acidic residues" evidence="6">
    <location>
        <begin position="348"/>
        <end position="357"/>
    </location>
</feature>
<feature type="compositionally biased region" description="Pro residues" evidence="6">
    <location>
        <begin position="476"/>
        <end position="485"/>
    </location>
</feature>
<feature type="active site" description="Proton acceptor" evidence="4 5">
    <location>
        <position position="175"/>
    </location>
</feature>
<feature type="binding site" evidence="4">
    <location>
        <begin position="63"/>
        <end position="71"/>
    </location>
    <ligand>
        <name>ATP</name>
        <dbReference type="ChEBI" id="CHEBI:30616"/>
    </ligand>
</feature>
<feature type="binding site" evidence="4">
    <location>
        <position position="86"/>
    </location>
    <ligand>
        <name>ATP</name>
        <dbReference type="ChEBI" id="CHEBI:30616"/>
    </ligand>
</feature>
<feature type="modified residue" description="Phosphoserine; by autocatalysis" evidence="3">
    <location>
        <position position="220"/>
    </location>
</feature>
<feature type="modified residue" description="Omega-N-methylarginine" evidence="2">
    <location>
        <position position="338"/>
    </location>
</feature>
<feature type="sequence variant" id="VAR_035638" description="In breast cancer samples; infiltrating ductal carcinoma; somatic mutation; dbSNP:rs1373248755." evidence="11 12">
    <original>H</original>
    <variation>Y</variation>
    <location>
        <position position="539"/>
    </location>
</feature>
<feature type="sequence variant" id="VAR_041213" description="In dbSNP:rs55673450." evidence="12">
    <original>G</original>
    <variation>S</variation>
    <location>
        <position position="574"/>
    </location>
</feature>
<feature type="mutagenesis site" description="Abolishes inhibition of SPRY4-mediated repression of cell spreading. No effect on interaction with SPRY4 or colocalization with SPRY4 at vesicular spots in the cytoplasm." evidence="9">
    <original>D</original>
    <variation>A</variation>
    <location>
        <position position="175"/>
    </location>
</feature>
<feature type="sequence conflict" description="In Ref. 1; BAA09459." evidence="17" ref="1">
    <original>A</original>
    <variation>V</variation>
    <location>
        <position position="43"/>
    </location>
</feature>
<evidence type="ECO:0000250" key="1"/>
<evidence type="ECO:0000250" key="2">
    <source>
        <dbReference type="UniProtKB" id="O70146"/>
    </source>
</evidence>
<evidence type="ECO:0000250" key="3">
    <source>
        <dbReference type="UniProtKB" id="Q63572"/>
    </source>
</evidence>
<evidence type="ECO:0000255" key="4">
    <source>
        <dbReference type="PROSITE-ProRule" id="PRU00159"/>
    </source>
</evidence>
<evidence type="ECO:0000255" key="5">
    <source>
        <dbReference type="PROSITE-ProRule" id="PRU10028"/>
    </source>
</evidence>
<evidence type="ECO:0000256" key="6">
    <source>
        <dbReference type="SAM" id="MobiDB-lite"/>
    </source>
</evidence>
<evidence type="ECO:0000269" key="7">
    <source>
    </source>
</evidence>
<evidence type="ECO:0000269" key="8">
    <source>
    </source>
</evidence>
<evidence type="ECO:0000269" key="9">
    <source>
    </source>
</evidence>
<evidence type="ECO:0000269" key="10">
    <source>
    </source>
</evidence>
<evidence type="ECO:0000269" key="11">
    <source>
    </source>
</evidence>
<evidence type="ECO:0000269" key="12">
    <source>
    </source>
</evidence>
<evidence type="ECO:0000269" key="13">
    <source>
    </source>
</evidence>
<evidence type="ECO:0000269" key="14">
    <source>
    </source>
</evidence>
<evidence type="ECO:0000269" key="15">
    <source>
    </source>
</evidence>
<evidence type="ECO:0000269" key="16">
    <source>
    </source>
</evidence>
<evidence type="ECO:0000305" key="17"/>
<sequence>MAGERPPLRGPGPGPGEVPGEGPPGPGGTGGGPGRGRPSSYRALRSAVSSLARVDDFHCAEKIGAGFFSEVYKVRHRQSGQVMVLKMNKLPSNRGNTLREVQLMNRLRHPNILRFMGVCVHQGQLHALTEYMNGGTLEQLLSSPEPLSWPVRLHLALDIARGLRYLHSKGVFHRDLTSKNCLVRREDRGFTAVVGDFGLAEKIPVYREGARKEPLAVVGSPYWMAPEVLRGELYDEKADVFAFGIVLCELIARVPADPDYLPRTEDFGLDVPAFRTLVGDDCPLPFLLLAIHCCNLEPSTRAPFTEITQHLEWILEQLPEPAPLTRTALTHNQGSVARGGPSATLPRPDPRLSRSRSDLFLPPSPESPPNWGDNLTRVNPFSLREDLRGGKIKLLDTPSKPVLPLVPPSPFPSTQLPLVTTPETLVQPGTPARRCRSLPSSPELPRRMETALPGPGPPAVGPSAEEKMECEGSSPEPEPPGPAPQLPLAVATDNFISTCSSASQPWSPRSGPVLNNNPPAVVVNSPQGWAGEPWNRAQHSLPRAAALERTEPSPPPSAPREPDEGLPCPGCCLGPFSFGFLSMCPRPTPAVARYRNLNCEAGSLLCHRGHHAKPPTPSLQLPGARS</sequence>
<name>TESK1_HUMAN</name>
<dbReference type="EC" id="2.7.12.1"/>
<dbReference type="EMBL" id="D50863">
    <property type="protein sequence ID" value="BAA09459.1"/>
    <property type="molecule type" value="mRNA"/>
</dbReference>
<dbReference type="EMBL" id="AL357874">
    <property type="status" value="NOT_ANNOTATED_CDS"/>
    <property type="molecule type" value="Genomic_DNA"/>
</dbReference>
<dbReference type="EMBL" id="CH471071">
    <property type="protein sequence ID" value="EAW58375.1"/>
    <property type="molecule type" value="Genomic_DNA"/>
</dbReference>
<dbReference type="EMBL" id="BC038448">
    <property type="protein sequence ID" value="AAH38448.1"/>
    <property type="molecule type" value="mRNA"/>
</dbReference>
<dbReference type="EMBL" id="BC067130">
    <property type="protein sequence ID" value="AAH67130.1"/>
    <property type="molecule type" value="mRNA"/>
</dbReference>
<dbReference type="CCDS" id="CCDS6580.1"/>
<dbReference type="RefSeq" id="NP_001305159.1">
    <property type="nucleotide sequence ID" value="NM_001318230.1"/>
</dbReference>
<dbReference type="RefSeq" id="NP_006276.2">
    <property type="nucleotide sequence ID" value="NM_006285.3"/>
</dbReference>
<dbReference type="SMR" id="Q15569"/>
<dbReference type="BioGRID" id="112875">
    <property type="interactions" value="31"/>
</dbReference>
<dbReference type="FunCoup" id="Q15569">
    <property type="interactions" value="1999"/>
</dbReference>
<dbReference type="IntAct" id="Q15569">
    <property type="interactions" value="23"/>
</dbReference>
<dbReference type="MINT" id="Q15569"/>
<dbReference type="STRING" id="9606.ENSP00000338127"/>
<dbReference type="BindingDB" id="Q15569"/>
<dbReference type="ChEMBL" id="CHEMBL5604"/>
<dbReference type="DrugBank" id="DB12010">
    <property type="generic name" value="Fostamatinib"/>
</dbReference>
<dbReference type="DrugCentral" id="Q15569"/>
<dbReference type="GuidetoPHARMACOLOGY" id="2239"/>
<dbReference type="GlyGen" id="Q15569">
    <property type="glycosylation" value="2 sites"/>
</dbReference>
<dbReference type="iPTMnet" id="Q15569"/>
<dbReference type="PhosphoSitePlus" id="Q15569"/>
<dbReference type="SwissPalm" id="Q15569"/>
<dbReference type="BioMuta" id="TESK1"/>
<dbReference type="DMDM" id="209572684"/>
<dbReference type="CPTAC" id="non-CPTAC-6005"/>
<dbReference type="jPOST" id="Q15569"/>
<dbReference type="MassIVE" id="Q15569"/>
<dbReference type="PaxDb" id="9606-ENSP00000481045"/>
<dbReference type="PeptideAtlas" id="Q15569"/>
<dbReference type="ProteomicsDB" id="60637"/>
<dbReference type="Pumba" id="Q15569"/>
<dbReference type="Antibodypedia" id="2068">
    <property type="antibodies" value="161 antibodies from 27 providers"/>
</dbReference>
<dbReference type="DNASU" id="7016"/>
<dbReference type="Ensembl" id="ENST00000336395.6">
    <property type="protein sequence ID" value="ENSP00000338127.5"/>
    <property type="gene ID" value="ENSG00000107140.17"/>
</dbReference>
<dbReference type="GeneID" id="7016"/>
<dbReference type="KEGG" id="hsa:7016"/>
<dbReference type="MANE-Select" id="ENST00000336395.6">
    <property type="protein sequence ID" value="ENSP00000338127.5"/>
    <property type="RefSeq nucleotide sequence ID" value="NM_006285.3"/>
    <property type="RefSeq protein sequence ID" value="NP_006276.2"/>
</dbReference>
<dbReference type="UCSC" id="uc003zxa.4">
    <property type="organism name" value="human"/>
</dbReference>
<dbReference type="AGR" id="HGNC:11731"/>
<dbReference type="CTD" id="7016"/>
<dbReference type="DisGeNET" id="7016"/>
<dbReference type="GeneCards" id="TESK1"/>
<dbReference type="HGNC" id="HGNC:11731">
    <property type="gene designation" value="TESK1"/>
</dbReference>
<dbReference type="HPA" id="ENSG00000107140">
    <property type="expression patterns" value="Low tissue specificity"/>
</dbReference>
<dbReference type="MIM" id="601782">
    <property type="type" value="gene"/>
</dbReference>
<dbReference type="neXtProt" id="NX_Q15569"/>
<dbReference type="OpenTargets" id="ENSG00000107140"/>
<dbReference type="PharmGKB" id="PA36448"/>
<dbReference type="VEuPathDB" id="HostDB:ENSG00000107140"/>
<dbReference type="eggNOG" id="ENOG502QTCP">
    <property type="taxonomic scope" value="Eukaryota"/>
</dbReference>
<dbReference type="GeneTree" id="ENSGT00940000157807"/>
<dbReference type="HOGENOM" id="CLU_018577_0_0_1"/>
<dbReference type="InParanoid" id="Q15569"/>
<dbReference type="OMA" id="SPPTWGD"/>
<dbReference type="OrthoDB" id="20134at2759"/>
<dbReference type="PAN-GO" id="Q15569">
    <property type="GO annotations" value="5 GO annotations based on evolutionary models"/>
</dbReference>
<dbReference type="PhylomeDB" id="Q15569"/>
<dbReference type="TreeFam" id="TF318014"/>
<dbReference type="BRENDA" id="2.7.10.2">
    <property type="organism ID" value="2681"/>
</dbReference>
<dbReference type="PathwayCommons" id="Q15569"/>
<dbReference type="Reactome" id="R-HSA-446388">
    <property type="pathway name" value="Regulation of cytoskeletal remodeling and cell spreading by IPP complex components"/>
</dbReference>
<dbReference type="SignaLink" id="Q15569"/>
<dbReference type="SIGNOR" id="Q15569"/>
<dbReference type="BioGRID-ORCS" id="7016">
    <property type="hits" value="32 hits in 1190 CRISPR screens"/>
</dbReference>
<dbReference type="ChiTaRS" id="TESK1">
    <property type="organism name" value="human"/>
</dbReference>
<dbReference type="GeneWiki" id="TESK1"/>
<dbReference type="GenomeRNAi" id="7016"/>
<dbReference type="Pharos" id="Q15569">
    <property type="development level" value="Tchem"/>
</dbReference>
<dbReference type="PRO" id="PR:Q15569"/>
<dbReference type="Proteomes" id="UP000005640">
    <property type="component" value="Chromosome 9"/>
</dbReference>
<dbReference type="RNAct" id="Q15569">
    <property type="molecule type" value="protein"/>
</dbReference>
<dbReference type="Bgee" id="ENSG00000107140">
    <property type="expression patterns" value="Expressed in right testis and 179 other cell types or tissues"/>
</dbReference>
<dbReference type="GO" id="GO:0005813">
    <property type="term" value="C:centrosome"/>
    <property type="evidence" value="ECO:0000314"/>
    <property type="project" value="UniProtKB"/>
</dbReference>
<dbReference type="GO" id="GO:0005737">
    <property type="term" value="C:cytoplasm"/>
    <property type="evidence" value="ECO:0000314"/>
    <property type="project" value="UniProtKB"/>
</dbReference>
<dbReference type="GO" id="GO:0031410">
    <property type="term" value="C:cytoplasmic vesicle"/>
    <property type="evidence" value="ECO:0007669"/>
    <property type="project" value="Ensembl"/>
</dbReference>
<dbReference type="GO" id="GO:0005829">
    <property type="term" value="C:cytosol"/>
    <property type="evidence" value="ECO:0000304"/>
    <property type="project" value="Reactome"/>
</dbReference>
<dbReference type="GO" id="GO:0030027">
    <property type="term" value="C:lamellipodium"/>
    <property type="evidence" value="ECO:0007669"/>
    <property type="project" value="UniProtKB-SubCell"/>
</dbReference>
<dbReference type="GO" id="GO:0005634">
    <property type="term" value="C:nucleus"/>
    <property type="evidence" value="ECO:0000318"/>
    <property type="project" value="GO_Central"/>
</dbReference>
<dbReference type="GO" id="GO:0048471">
    <property type="term" value="C:perinuclear region of cytoplasm"/>
    <property type="evidence" value="ECO:0000250"/>
    <property type="project" value="UniProtKB"/>
</dbReference>
<dbReference type="GO" id="GO:0005524">
    <property type="term" value="F:ATP binding"/>
    <property type="evidence" value="ECO:0007669"/>
    <property type="project" value="UniProtKB-KW"/>
</dbReference>
<dbReference type="GO" id="GO:0046872">
    <property type="term" value="F:metal ion binding"/>
    <property type="evidence" value="ECO:0007669"/>
    <property type="project" value="UniProtKB-KW"/>
</dbReference>
<dbReference type="GO" id="GO:0004672">
    <property type="term" value="F:protein kinase activity"/>
    <property type="evidence" value="ECO:0000315"/>
    <property type="project" value="UniProtKB"/>
</dbReference>
<dbReference type="GO" id="GO:0019901">
    <property type="term" value="F:protein kinase binding"/>
    <property type="evidence" value="ECO:0007669"/>
    <property type="project" value="Ensembl"/>
</dbReference>
<dbReference type="GO" id="GO:0106310">
    <property type="term" value="F:protein serine kinase activity"/>
    <property type="evidence" value="ECO:0007669"/>
    <property type="project" value="RHEA"/>
</dbReference>
<dbReference type="GO" id="GO:0004674">
    <property type="term" value="F:protein serine/threonine kinase activity"/>
    <property type="evidence" value="ECO:0000318"/>
    <property type="project" value="GO_Central"/>
</dbReference>
<dbReference type="GO" id="GO:0030291">
    <property type="term" value="F:protein serine/threonine kinase inhibitor activity"/>
    <property type="evidence" value="ECO:0000250"/>
    <property type="project" value="ARUK-UCL"/>
</dbReference>
<dbReference type="GO" id="GO:0004712">
    <property type="term" value="F:protein serine/threonine/tyrosine kinase activity"/>
    <property type="evidence" value="ECO:0007669"/>
    <property type="project" value="UniProtKB-EC"/>
</dbReference>
<dbReference type="GO" id="GO:0004713">
    <property type="term" value="F:protein tyrosine kinase activity"/>
    <property type="evidence" value="ECO:0007669"/>
    <property type="project" value="UniProtKB-KW"/>
</dbReference>
<dbReference type="GO" id="GO:0030036">
    <property type="term" value="P:actin cytoskeleton organization"/>
    <property type="evidence" value="ECO:0000318"/>
    <property type="project" value="GO_Central"/>
</dbReference>
<dbReference type="GO" id="GO:0051650">
    <property type="term" value="P:establishment of vesicle localization"/>
    <property type="evidence" value="ECO:0000315"/>
    <property type="project" value="UniProtKB"/>
</dbReference>
<dbReference type="GO" id="GO:1902018">
    <property type="term" value="P:negative regulation of cilium assembly"/>
    <property type="evidence" value="ECO:0000315"/>
    <property type="project" value="UniProtKB"/>
</dbReference>
<dbReference type="GO" id="GO:0070966">
    <property type="term" value="P:nuclear-transcribed mRNA catabolic process, no-go decay"/>
    <property type="evidence" value="ECO:0000250"/>
    <property type="project" value="UniProtKB"/>
</dbReference>
<dbReference type="GO" id="GO:0090521">
    <property type="term" value="P:podocyte cell migration"/>
    <property type="evidence" value="ECO:0000250"/>
    <property type="project" value="UniProtKB"/>
</dbReference>
<dbReference type="GO" id="GO:1900182">
    <property type="term" value="P:positive regulation of protein localization to nucleus"/>
    <property type="evidence" value="ECO:0000315"/>
    <property type="project" value="UniProtKB"/>
</dbReference>
<dbReference type="GO" id="GO:0051496">
    <property type="term" value="P:positive regulation of stress fiber assembly"/>
    <property type="evidence" value="ECO:0000250"/>
    <property type="project" value="ARUK-UCL"/>
</dbReference>
<dbReference type="GO" id="GO:1900026">
    <property type="term" value="P:positive regulation of substrate adhesion-dependent cell spreading"/>
    <property type="evidence" value="ECO:0000315"/>
    <property type="project" value="UniProtKB"/>
</dbReference>
<dbReference type="GO" id="GO:0032956">
    <property type="term" value="P:regulation of actin cytoskeleton organization"/>
    <property type="evidence" value="ECO:0000250"/>
    <property type="project" value="UniProtKB"/>
</dbReference>
<dbReference type="GO" id="GO:0032880">
    <property type="term" value="P:regulation of protein localization"/>
    <property type="evidence" value="ECO:0000250"/>
    <property type="project" value="ARUK-UCL"/>
</dbReference>
<dbReference type="GO" id="GO:0007283">
    <property type="term" value="P:spermatogenesis"/>
    <property type="evidence" value="ECO:0000304"/>
    <property type="project" value="ProtInc"/>
</dbReference>
<dbReference type="CDD" id="cd14155">
    <property type="entry name" value="PKc_TESK"/>
    <property type="match status" value="1"/>
</dbReference>
<dbReference type="FunFam" id="1.10.510.10:FF:000202">
    <property type="entry name" value="Dual specificity testis-specific protein kinase 2"/>
    <property type="match status" value="1"/>
</dbReference>
<dbReference type="FunFam" id="3.30.200.20:FF:000134">
    <property type="entry name" value="Dual specificity testis-specific protein kinase 2"/>
    <property type="match status" value="1"/>
</dbReference>
<dbReference type="Gene3D" id="3.30.200.20">
    <property type="entry name" value="Phosphorylase Kinase, domain 1"/>
    <property type="match status" value="1"/>
</dbReference>
<dbReference type="Gene3D" id="1.10.510.10">
    <property type="entry name" value="Transferase(Phosphotransferase) domain 1"/>
    <property type="match status" value="1"/>
</dbReference>
<dbReference type="InterPro" id="IPR050940">
    <property type="entry name" value="Actin_reg-Ser/Thr_kinase"/>
</dbReference>
<dbReference type="InterPro" id="IPR011009">
    <property type="entry name" value="Kinase-like_dom_sf"/>
</dbReference>
<dbReference type="InterPro" id="IPR000719">
    <property type="entry name" value="Prot_kinase_dom"/>
</dbReference>
<dbReference type="InterPro" id="IPR017441">
    <property type="entry name" value="Protein_kinase_ATP_BS"/>
</dbReference>
<dbReference type="InterPro" id="IPR001245">
    <property type="entry name" value="Ser-Thr/Tyr_kinase_cat_dom"/>
</dbReference>
<dbReference type="InterPro" id="IPR008266">
    <property type="entry name" value="Tyr_kinase_AS"/>
</dbReference>
<dbReference type="PANTHER" id="PTHR46485:SF3">
    <property type="entry name" value="DUAL SPECIFICITY TESTIS-SPECIFIC PROTEIN KINASE 1"/>
    <property type="match status" value="1"/>
</dbReference>
<dbReference type="PANTHER" id="PTHR46485">
    <property type="entry name" value="LIM DOMAIN KINASE 1"/>
    <property type="match status" value="1"/>
</dbReference>
<dbReference type="Pfam" id="PF07714">
    <property type="entry name" value="PK_Tyr_Ser-Thr"/>
    <property type="match status" value="1"/>
</dbReference>
<dbReference type="PRINTS" id="PR00109">
    <property type="entry name" value="TYRKINASE"/>
</dbReference>
<dbReference type="SUPFAM" id="SSF56112">
    <property type="entry name" value="Protein kinase-like (PK-like)"/>
    <property type="match status" value="1"/>
</dbReference>
<dbReference type="PROSITE" id="PS00107">
    <property type="entry name" value="PROTEIN_KINASE_ATP"/>
    <property type="match status" value="1"/>
</dbReference>
<dbReference type="PROSITE" id="PS50011">
    <property type="entry name" value="PROTEIN_KINASE_DOM"/>
    <property type="match status" value="1"/>
</dbReference>
<dbReference type="PROSITE" id="PS00109">
    <property type="entry name" value="PROTEIN_KINASE_TYR"/>
    <property type="match status" value="1"/>
</dbReference>
<keyword id="KW-0067">ATP-binding</keyword>
<keyword id="KW-0966">Cell projection</keyword>
<keyword id="KW-0963">Cytoplasm</keyword>
<keyword id="KW-0206">Cytoskeleton</keyword>
<keyword id="KW-0418">Kinase</keyword>
<keyword id="KW-0460">Magnesium</keyword>
<keyword id="KW-0464">Manganese</keyword>
<keyword id="KW-0479">Metal-binding</keyword>
<keyword id="KW-0488">Methylation</keyword>
<keyword id="KW-0547">Nucleotide-binding</keyword>
<keyword id="KW-0597">Phosphoprotein</keyword>
<keyword id="KW-1267">Proteomics identification</keyword>
<keyword id="KW-1185">Reference proteome</keyword>
<keyword id="KW-0723">Serine/threonine-protein kinase</keyword>
<keyword id="KW-0808">Transferase</keyword>
<keyword id="KW-0829">Tyrosine-protein kinase</keyword>
<comment type="function">
    <text evidence="2 3 9 15">Dual specificity protein kinase activity catalyzing autophosphorylation and phosphorylation of exogenous substrates on both serine/threonine and tyrosine residues (By similarity). Regulates the cellular cytoskeleton by enhancing actin stress fiber formation via phosphorylation of cofilin and by preventing microtubule breakdown via inhibition of TAOK1/MARKK kinase activity (By similarity). Inhibits podocyte motility via regulation of actin cytoskeletal dynamics and phosphorylation of CFL1 (By similarity). Positively regulates integrin-mediated cell spreading, via phosphorylation of cofilin (PubMed:15584898). Suppresses ciliogenesis via multiple pathways; phosphorylation of CFL1, suppression of ciliary vesicle directional trafficking to the ciliary base, and by facilitating YAP1 nuclear localization where it acts as a transcriptional corepressor of the TEAD4 target genes AURKA and PLK1 (PubMed:25849865). Probably plays a central role at and after the meiotic phase of spermatogenesis (By similarity).</text>
</comment>
<comment type="catalytic activity">
    <reaction>
        <text>L-seryl-[protein] + ATP = O-phospho-L-seryl-[protein] + ADP + H(+)</text>
        <dbReference type="Rhea" id="RHEA:17989"/>
        <dbReference type="Rhea" id="RHEA-COMP:9863"/>
        <dbReference type="Rhea" id="RHEA-COMP:11604"/>
        <dbReference type="ChEBI" id="CHEBI:15378"/>
        <dbReference type="ChEBI" id="CHEBI:29999"/>
        <dbReference type="ChEBI" id="CHEBI:30616"/>
        <dbReference type="ChEBI" id="CHEBI:83421"/>
        <dbReference type="ChEBI" id="CHEBI:456216"/>
        <dbReference type="EC" id="2.7.12.1"/>
    </reaction>
</comment>
<comment type="catalytic activity">
    <reaction>
        <text>L-threonyl-[protein] + ATP = O-phospho-L-threonyl-[protein] + ADP + H(+)</text>
        <dbReference type="Rhea" id="RHEA:46608"/>
        <dbReference type="Rhea" id="RHEA-COMP:11060"/>
        <dbReference type="Rhea" id="RHEA-COMP:11605"/>
        <dbReference type="ChEBI" id="CHEBI:15378"/>
        <dbReference type="ChEBI" id="CHEBI:30013"/>
        <dbReference type="ChEBI" id="CHEBI:30616"/>
        <dbReference type="ChEBI" id="CHEBI:61977"/>
        <dbReference type="ChEBI" id="CHEBI:456216"/>
        <dbReference type="EC" id="2.7.12.1"/>
    </reaction>
</comment>
<comment type="catalytic activity">
    <reaction>
        <text>L-tyrosyl-[protein] + ATP = O-phospho-L-tyrosyl-[protein] + ADP + H(+)</text>
        <dbReference type="Rhea" id="RHEA:10596"/>
        <dbReference type="Rhea" id="RHEA-COMP:10136"/>
        <dbReference type="Rhea" id="RHEA-COMP:20101"/>
        <dbReference type="ChEBI" id="CHEBI:15378"/>
        <dbReference type="ChEBI" id="CHEBI:30616"/>
        <dbReference type="ChEBI" id="CHEBI:46858"/>
        <dbReference type="ChEBI" id="CHEBI:61978"/>
        <dbReference type="ChEBI" id="CHEBI:456216"/>
        <dbReference type="EC" id="2.7.12.1"/>
    </reaction>
</comment>
<comment type="cofactor">
    <cofactor evidence="1">
        <name>Mg(2+)</name>
        <dbReference type="ChEBI" id="CHEBI:18420"/>
    </cofactor>
</comment>
<comment type="cofactor">
    <cofactor evidence="1">
        <name>Mn(2+)</name>
        <dbReference type="ChEBI" id="CHEBI:29035"/>
    </cofactor>
</comment>
<comment type="activity regulation">
    <text evidence="3">Activated by autophosphorylation on Ser-220. Kinase activity is inhibited by SPRED1.</text>
</comment>
<comment type="subunit">
    <text evidence="3 7 8 9 10 13 14">Interacts (via both C- and N-termini) with SPRY4 (via C-terminus); the interaction inhibits TESK1 kinase activity (PubMed:12027893, PubMed:15584898). Interacts with TAOK1; the interaction inhibits TAOK1 kinase activity (By similarity). Interacts (via C-terminus) with SPRED1 (via C-terminus); the interaction inhibits TESK1 kinase activity (PubMed:18216281). Interacts (via C-terminus) with PARVA/PARVIN (via C-terminus); the interaction inhibits TESK1 kinase activity (PubMed:15817463). Interacts with YWHAB/14-3-3 beta; the interaction is dependent on the phosphorylation of TESK1 Ser-437 and inhibits TESK1 kinase activity (PubMed:11555644). Interacts with SPRY1, SPRY3 and SPRED2 (PubMed:17974561). Interacts (via C-terminus) with SPRY2 (via C-terminus); the interaction disrupts SPRY2 interaction with PPP2CA/PP2A-C, possibly by vesicular sequestration of SPRY2 (PubMed:17974561). Therefore dephosphorylation of SPRY2 by the serine/threonine-protein phosphatase 2A (PP2A) holoenzyme is lost, inhibiting its interaction with GRB2 (PubMed:17974561).</text>
</comment>
<comment type="interaction">
    <interactant intactId="EBI-354852">
        <id>Q15569</id>
    </interactant>
    <interactant intactId="EBI-354861">
        <id>Q9C004</id>
        <label>SPRY4</label>
    </interactant>
    <organismsDiffer>false</organismsDiffer>
    <experiments>4</experiments>
</comment>
<comment type="interaction">
    <interactant intactId="EBI-354852">
        <id>Q15569</id>
    </interactant>
    <interactant intactId="EBI-356498">
        <id>P62258</id>
        <label>YWHAE</label>
    </interactant>
    <organismsDiffer>false</organismsDiffer>
    <experiments>2</experiments>
</comment>
<comment type="subcellular location">
    <subcellularLocation>
        <location evidence="9">Cytoplasm</location>
    </subcellularLocation>
    <subcellularLocation>
        <location evidence="3">Cytoplasm</location>
        <location evidence="3">Perinuclear region</location>
    </subcellularLocation>
    <subcellularLocation>
        <location evidence="15">Cytoplasm</location>
        <location evidence="15">Cytoskeleton</location>
        <location evidence="15">Microtubule organizing center</location>
        <location evidence="15">Centrosome</location>
    </subcellularLocation>
    <subcellularLocation>
        <location evidence="3">Cell projection</location>
        <location evidence="3">Lamellipodium</location>
    </subcellularLocation>
    <text evidence="3 9">Colocalizes with SPRY4 in vesicular spots in the cytoplasm (PubMed:15584898). Localized to F-actin-rich lamellipodia at the cell periphery following fibronectin-mediated cell adhesion of Schwann cells (By similarity).</text>
</comment>
<comment type="tissue specificity">
    <text evidence="16">Expressed in podocytes and renal tubular cells in the kidney (at protein level).</text>
</comment>
<comment type="domain">
    <text>The extracatalytic C-terminal part is highly rich in proline residues.</text>
</comment>
<comment type="PTM">
    <text evidence="3">Autophosphorylated on serine and tyrosine residues.</text>
</comment>
<comment type="similarity">
    <text evidence="17">Belongs to the protein kinase superfamily. TKL Ser/Thr protein kinase family.</text>
</comment>
<proteinExistence type="evidence at protein level"/>
<accession>Q15569</accession>
<accession>Q8IXZ8</accession>
<organism>
    <name type="scientific">Homo sapiens</name>
    <name type="common">Human</name>
    <dbReference type="NCBI Taxonomy" id="9606"/>
    <lineage>
        <taxon>Eukaryota</taxon>
        <taxon>Metazoa</taxon>
        <taxon>Chordata</taxon>
        <taxon>Craniata</taxon>
        <taxon>Vertebrata</taxon>
        <taxon>Euteleostomi</taxon>
        <taxon>Mammalia</taxon>
        <taxon>Eutheria</taxon>
        <taxon>Euarchontoglires</taxon>
        <taxon>Primates</taxon>
        <taxon>Haplorrhini</taxon>
        <taxon>Catarrhini</taxon>
        <taxon>Hominidae</taxon>
        <taxon>Homo</taxon>
    </lineage>
</organism>
<reference key="1">
    <citation type="journal article" date="1995" name="J. Biol. Chem.">
        <title>Identification and characterization of a novel protein kinase, TESK1, specifically expressed in testicular germ cells.</title>
        <authorList>
            <person name="Toshima J."/>
            <person name="Ohashi K."/>
            <person name="Okano I."/>
            <person name="Nunoue K."/>
            <person name="Kishioka M."/>
            <person name="Kuma K."/>
            <person name="Miyata T."/>
            <person name="Hirai M."/>
            <person name="Baba T."/>
            <person name="Mizuno K."/>
        </authorList>
    </citation>
    <scope>NUCLEOTIDE SEQUENCE [MRNA]</scope>
    <source>
        <tissue>Hepatoma</tissue>
    </source>
</reference>
<reference key="2">
    <citation type="journal article" date="2004" name="Nature">
        <title>DNA sequence and analysis of human chromosome 9.</title>
        <authorList>
            <person name="Humphray S.J."/>
            <person name="Oliver K."/>
            <person name="Hunt A.R."/>
            <person name="Plumb R.W."/>
            <person name="Loveland J.E."/>
            <person name="Howe K.L."/>
            <person name="Andrews T.D."/>
            <person name="Searle S."/>
            <person name="Hunt S.E."/>
            <person name="Scott C.E."/>
            <person name="Jones M.C."/>
            <person name="Ainscough R."/>
            <person name="Almeida J.P."/>
            <person name="Ambrose K.D."/>
            <person name="Ashwell R.I.S."/>
            <person name="Babbage A.K."/>
            <person name="Babbage S."/>
            <person name="Bagguley C.L."/>
            <person name="Bailey J."/>
            <person name="Banerjee R."/>
            <person name="Barker D.J."/>
            <person name="Barlow K.F."/>
            <person name="Bates K."/>
            <person name="Beasley H."/>
            <person name="Beasley O."/>
            <person name="Bird C.P."/>
            <person name="Bray-Allen S."/>
            <person name="Brown A.J."/>
            <person name="Brown J.Y."/>
            <person name="Burford D."/>
            <person name="Burrill W."/>
            <person name="Burton J."/>
            <person name="Carder C."/>
            <person name="Carter N.P."/>
            <person name="Chapman J.C."/>
            <person name="Chen Y."/>
            <person name="Clarke G."/>
            <person name="Clark S.Y."/>
            <person name="Clee C.M."/>
            <person name="Clegg S."/>
            <person name="Collier R.E."/>
            <person name="Corby N."/>
            <person name="Crosier M."/>
            <person name="Cummings A.T."/>
            <person name="Davies J."/>
            <person name="Dhami P."/>
            <person name="Dunn M."/>
            <person name="Dutta I."/>
            <person name="Dyer L.W."/>
            <person name="Earthrowl M.E."/>
            <person name="Faulkner L."/>
            <person name="Fleming C.J."/>
            <person name="Frankish A."/>
            <person name="Frankland J.A."/>
            <person name="French L."/>
            <person name="Fricker D.G."/>
            <person name="Garner P."/>
            <person name="Garnett J."/>
            <person name="Ghori J."/>
            <person name="Gilbert J.G.R."/>
            <person name="Glison C."/>
            <person name="Grafham D.V."/>
            <person name="Gribble S."/>
            <person name="Griffiths C."/>
            <person name="Griffiths-Jones S."/>
            <person name="Grocock R."/>
            <person name="Guy J."/>
            <person name="Hall R.E."/>
            <person name="Hammond S."/>
            <person name="Harley J.L."/>
            <person name="Harrison E.S.I."/>
            <person name="Hart E.A."/>
            <person name="Heath P.D."/>
            <person name="Henderson C.D."/>
            <person name="Hopkins B.L."/>
            <person name="Howard P.J."/>
            <person name="Howden P.J."/>
            <person name="Huckle E."/>
            <person name="Johnson C."/>
            <person name="Johnson D."/>
            <person name="Joy A.A."/>
            <person name="Kay M."/>
            <person name="Keenan S."/>
            <person name="Kershaw J.K."/>
            <person name="Kimberley A.M."/>
            <person name="King A."/>
            <person name="Knights A."/>
            <person name="Laird G.K."/>
            <person name="Langford C."/>
            <person name="Lawlor S."/>
            <person name="Leongamornlert D.A."/>
            <person name="Leversha M."/>
            <person name="Lloyd C."/>
            <person name="Lloyd D.M."/>
            <person name="Lovell J."/>
            <person name="Martin S."/>
            <person name="Mashreghi-Mohammadi M."/>
            <person name="Matthews L."/>
            <person name="McLaren S."/>
            <person name="McLay K.E."/>
            <person name="McMurray A."/>
            <person name="Milne S."/>
            <person name="Nickerson T."/>
            <person name="Nisbett J."/>
            <person name="Nordsiek G."/>
            <person name="Pearce A.V."/>
            <person name="Peck A.I."/>
            <person name="Porter K.M."/>
            <person name="Pandian R."/>
            <person name="Pelan S."/>
            <person name="Phillimore B."/>
            <person name="Povey S."/>
            <person name="Ramsey Y."/>
            <person name="Rand V."/>
            <person name="Scharfe M."/>
            <person name="Sehra H.K."/>
            <person name="Shownkeen R."/>
            <person name="Sims S.K."/>
            <person name="Skuce C.D."/>
            <person name="Smith M."/>
            <person name="Steward C.A."/>
            <person name="Swarbreck D."/>
            <person name="Sycamore N."/>
            <person name="Tester J."/>
            <person name="Thorpe A."/>
            <person name="Tracey A."/>
            <person name="Tromans A."/>
            <person name="Thomas D.W."/>
            <person name="Wall M."/>
            <person name="Wallis J.M."/>
            <person name="West A.P."/>
            <person name="Whitehead S.L."/>
            <person name="Willey D.L."/>
            <person name="Williams S.A."/>
            <person name="Wilming L."/>
            <person name="Wray P.W."/>
            <person name="Young L."/>
            <person name="Ashurst J.L."/>
            <person name="Coulson A."/>
            <person name="Blocker H."/>
            <person name="Durbin R.M."/>
            <person name="Sulston J.E."/>
            <person name="Hubbard T."/>
            <person name="Jackson M.J."/>
            <person name="Bentley D.R."/>
            <person name="Beck S."/>
            <person name="Rogers J."/>
            <person name="Dunham I."/>
        </authorList>
    </citation>
    <scope>NUCLEOTIDE SEQUENCE [LARGE SCALE GENOMIC DNA]</scope>
</reference>
<reference key="3">
    <citation type="submission" date="2005-09" db="EMBL/GenBank/DDBJ databases">
        <authorList>
            <person name="Mural R.J."/>
            <person name="Istrail S."/>
            <person name="Sutton G.G."/>
            <person name="Florea L."/>
            <person name="Halpern A.L."/>
            <person name="Mobarry C.M."/>
            <person name="Lippert R."/>
            <person name="Walenz B."/>
            <person name="Shatkay H."/>
            <person name="Dew I."/>
            <person name="Miller J.R."/>
            <person name="Flanigan M.J."/>
            <person name="Edwards N.J."/>
            <person name="Bolanos R."/>
            <person name="Fasulo D."/>
            <person name="Halldorsson B.V."/>
            <person name="Hannenhalli S."/>
            <person name="Turner R."/>
            <person name="Yooseph S."/>
            <person name="Lu F."/>
            <person name="Nusskern D.R."/>
            <person name="Shue B.C."/>
            <person name="Zheng X.H."/>
            <person name="Zhong F."/>
            <person name="Delcher A.L."/>
            <person name="Huson D.H."/>
            <person name="Kravitz S.A."/>
            <person name="Mouchard L."/>
            <person name="Reinert K."/>
            <person name="Remington K.A."/>
            <person name="Clark A.G."/>
            <person name="Waterman M.S."/>
            <person name="Eichler E.E."/>
            <person name="Adams M.D."/>
            <person name="Hunkapiller M.W."/>
            <person name="Myers E.W."/>
            <person name="Venter J.C."/>
        </authorList>
    </citation>
    <scope>NUCLEOTIDE SEQUENCE [LARGE SCALE GENOMIC DNA]</scope>
</reference>
<reference key="4">
    <citation type="journal article" date="2004" name="Genome Res.">
        <title>The status, quality, and expansion of the NIH full-length cDNA project: the Mammalian Gene Collection (MGC).</title>
        <authorList>
            <consortium name="The MGC Project Team"/>
        </authorList>
    </citation>
    <scope>NUCLEOTIDE SEQUENCE [LARGE SCALE MRNA]</scope>
    <source>
        <tissue>Brain</tissue>
        <tissue>Eye</tissue>
    </source>
</reference>
<reference key="5">
    <citation type="journal article" date="2001" name="J. Biol. Chem.">
        <title>Binding of 14-3-3beta regulates the kinase activity and subcellular localization of testicular protein kinase 1.</title>
        <authorList>
            <person name="Toshima J.Y."/>
            <person name="Toshima J."/>
            <person name="Watanabe T."/>
            <person name="Mizuno K."/>
        </authorList>
    </citation>
    <scope>INTERACTION WITH YWHAB</scope>
</reference>
<reference key="6">
    <citation type="journal article" date="2002" name="Eur. J. Biochem.">
        <title>Human sprouty 4, a new ras antagonist on 5q31, interacts with the dual specificity kinase TESK1.</title>
        <authorList>
            <person name="Leeksma O.C."/>
            <person name="van Achterberg T.A.E."/>
            <person name="Tsumura Y."/>
            <person name="Toshima J."/>
            <person name="Eldering E."/>
            <person name="Kroes W.G.M."/>
            <person name="Mellink C."/>
            <person name="Spaargaren M."/>
            <person name="Mizuno K."/>
            <person name="Pannekoek H."/>
            <person name="de Vries C.J.M."/>
        </authorList>
    </citation>
    <scope>INTERACTION WITH SPRY4</scope>
</reference>
<reference key="7">
    <citation type="journal article" date="2005" name="Biochem. J.">
        <title>Sprouty-4 negatively regulates cell spreading by inhibiting the kinase activity of testicular protein kinase.</title>
        <authorList>
            <person name="Tsumura Y."/>
            <person name="Toshima J."/>
            <person name="Leeksma O.C."/>
            <person name="Ohashi K."/>
            <person name="Mizuno K."/>
        </authorList>
    </citation>
    <scope>FUNCTION</scope>
    <scope>INTERACTION WITH SPRY4</scope>
    <scope>SUBCELLULAR LOCATION</scope>
    <scope>MUTAGENESIS OF ASP-175</scope>
</reference>
<reference key="8">
    <citation type="journal article" date="2005" name="J. Biol. Chem.">
        <title>Actopaxin interacts with TESK1 to regulate cell spreading on fibronectin.</title>
        <authorList>
            <person name="LaLonde D.P."/>
            <person name="Brown M.C."/>
            <person name="Bouverat B.P."/>
            <person name="Turner C.E."/>
        </authorList>
    </citation>
    <scope>INTERACTION WITH PARVA</scope>
</reference>
<reference key="9">
    <citation type="journal article" date="2008" name="J. Biol. Chem.">
        <title>Tesk1 interacts with Spry2 to abrogate its inhibition of ERK phosphorylation downstream of receptor tyrosine kinase signaling.</title>
        <authorList>
            <person name="Chandramouli S."/>
            <person name="Yu C.Y."/>
            <person name="Yusoff P."/>
            <person name="Lao D.H."/>
            <person name="Leong H.F."/>
            <person name="Mizuno K."/>
            <person name="Guy G.R."/>
        </authorList>
    </citation>
    <scope>INTERACTION WITH SPRED1</scope>
</reference>
<reference key="10">
    <citation type="journal article" date="2008" name="Mol. Biol. Cell">
        <title>Spred1 and TESK1--two new interaction partners of the kinase MARKK/TAO1 that link the microtubule and actin cytoskeleton.</title>
        <authorList>
            <person name="Johne C."/>
            <person name="Matenia D."/>
            <person name="Li X.Y."/>
            <person name="Timm T."/>
            <person name="Balusamy K."/>
            <person name="Mandelkow E.M."/>
        </authorList>
    </citation>
    <scope>INTERACTION WITH SPRED1</scope>
</reference>
<reference key="11">
    <citation type="journal article" date="2015" name="Nat. Commun.">
        <title>Actin remodelling factors control ciliogenesis by regulating YAP/TAZ activity and vesicle trafficking.</title>
        <authorList>
            <person name="Kim J."/>
            <person name="Jo H."/>
            <person name="Hong H."/>
            <person name="Kim M.H."/>
            <person name="Kim J.M."/>
            <person name="Lee J.K."/>
            <person name="Heo W.D."/>
            <person name="Kim J."/>
        </authorList>
    </citation>
    <scope>FUNCTION</scope>
    <scope>SUBCELLULAR LOCATION</scope>
</reference>
<reference key="12">
    <citation type="journal article" date="2018" name="Sci. Rep.">
        <title>Regulation of cofilin phosphorylation in glomerular podocytes by testis specific kinase 1 (TESK1).</title>
        <authorList>
            <person name="Wang L."/>
            <person name="Buckley A.F."/>
            <person name="Spurney R.F."/>
        </authorList>
    </citation>
    <scope>TISSUE SPECIFICITY</scope>
</reference>
<reference key="13">
    <citation type="journal article" date="2006" name="Science">
        <title>The consensus coding sequences of human breast and colorectal cancers.</title>
        <authorList>
            <person name="Sjoeblom T."/>
            <person name="Jones S."/>
            <person name="Wood L.D."/>
            <person name="Parsons D.W."/>
            <person name="Lin J."/>
            <person name="Barber T.D."/>
            <person name="Mandelker D."/>
            <person name="Leary R.J."/>
            <person name="Ptak J."/>
            <person name="Silliman N."/>
            <person name="Szabo S."/>
            <person name="Buckhaults P."/>
            <person name="Farrell C."/>
            <person name="Meeh P."/>
            <person name="Markowitz S.D."/>
            <person name="Willis J."/>
            <person name="Dawson D."/>
            <person name="Willson J.K.V."/>
            <person name="Gazdar A.F."/>
            <person name="Hartigan J."/>
            <person name="Wu L."/>
            <person name="Liu C."/>
            <person name="Parmigiani G."/>
            <person name="Park B.H."/>
            <person name="Bachman K.E."/>
            <person name="Papadopoulos N."/>
            <person name="Vogelstein B."/>
            <person name="Kinzler K.W."/>
            <person name="Velculescu V.E."/>
        </authorList>
    </citation>
    <scope>VARIANT [LARGE SCALE ANALYSIS] TYR-539</scope>
</reference>
<reference key="14">
    <citation type="journal article" date="2007" name="Nature">
        <title>Patterns of somatic mutation in human cancer genomes.</title>
        <authorList>
            <person name="Greenman C."/>
            <person name="Stephens P."/>
            <person name="Smith R."/>
            <person name="Dalgliesh G.L."/>
            <person name="Hunter C."/>
            <person name="Bignell G."/>
            <person name="Davies H."/>
            <person name="Teague J."/>
            <person name="Butler A."/>
            <person name="Stevens C."/>
            <person name="Edkins S."/>
            <person name="O'Meara S."/>
            <person name="Vastrik I."/>
            <person name="Schmidt E.E."/>
            <person name="Avis T."/>
            <person name="Barthorpe S."/>
            <person name="Bhamra G."/>
            <person name="Buck G."/>
            <person name="Choudhury B."/>
            <person name="Clements J."/>
            <person name="Cole J."/>
            <person name="Dicks E."/>
            <person name="Forbes S."/>
            <person name="Gray K."/>
            <person name="Halliday K."/>
            <person name="Harrison R."/>
            <person name="Hills K."/>
            <person name="Hinton J."/>
            <person name="Jenkinson A."/>
            <person name="Jones D."/>
            <person name="Menzies A."/>
            <person name="Mironenko T."/>
            <person name="Perry J."/>
            <person name="Raine K."/>
            <person name="Richardson D."/>
            <person name="Shepherd R."/>
            <person name="Small A."/>
            <person name="Tofts C."/>
            <person name="Varian J."/>
            <person name="Webb T."/>
            <person name="West S."/>
            <person name="Widaa S."/>
            <person name="Yates A."/>
            <person name="Cahill D.P."/>
            <person name="Louis D.N."/>
            <person name="Goldstraw P."/>
            <person name="Nicholson A.G."/>
            <person name="Brasseur F."/>
            <person name="Looijenga L."/>
            <person name="Weber B.L."/>
            <person name="Chiew Y.-E."/>
            <person name="DeFazio A."/>
            <person name="Greaves M.F."/>
            <person name="Green A.R."/>
            <person name="Campbell P."/>
            <person name="Birney E."/>
            <person name="Easton D.F."/>
            <person name="Chenevix-Trench G."/>
            <person name="Tan M.-H."/>
            <person name="Khoo S.K."/>
            <person name="Teh B.T."/>
            <person name="Yuen S.T."/>
            <person name="Leung S.Y."/>
            <person name="Wooster R."/>
            <person name="Futreal P.A."/>
            <person name="Stratton M.R."/>
        </authorList>
    </citation>
    <scope>VARIANTS [LARGE SCALE ANALYSIS] TYR-539 AND SER-574</scope>
</reference>